<keyword id="KW-0002">3D-structure</keyword>
<keyword id="KW-0009">Actin-binding</keyword>
<keyword id="KW-0025">Alternative splicing</keyword>
<keyword id="KW-1003">Cell membrane</keyword>
<keyword id="KW-0966">Cell projection</keyword>
<keyword id="KW-0963">Cytoplasm</keyword>
<keyword id="KW-0209">Deafness</keyword>
<keyword id="KW-0472">Membrane</keyword>
<keyword id="KW-1010">Non-syndromic deafness</keyword>
<keyword id="KW-0597">Phosphoprotein</keyword>
<keyword id="KW-1267">Proteomics identification</keyword>
<keyword id="KW-1185">Reference proteome</keyword>
<keyword id="KW-0728">SH3 domain</keyword>
<keyword id="KW-0770">Synapse</keyword>
<keyword id="KW-0771">Synaptosome</keyword>
<keyword id="KW-0832">Ubl conjugation</keyword>
<organism>
    <name type="scientific">Homo sapiens</name>
    <name type="common">Human</name>
    <dbReference type="NCBI Taxonomy" id="9606"/>
    <lineage>
        <taxon>Eukaryota</taxon>
        <taxon>Metazoa</taxon>
        <taxon>Chordata</taxon>
        <taxon>Craniata</taxon>
        <taxon>Vertebrata</taxon>
        <taxon>Euteleostomi</taxon>
        <taxon>Mammalia</taxon>
        <taxon>Eutheria</taxon>
        <taxon>Euarchontoglires</taxon>
        <taxon>Primates</taxon>
        <taxon>Haplorrhini</taxon>
        <taxon>Catarrhini</taxon>
        <taxon>Hominidae</taxon>
        <taxon>Homo</taxon>
    </lineage>
</organism>
<dbReference type="EMBL" id="U12535">
    <property type="protein sequence ID" value="AAA62280.1"/>
    <property type="molecule type" value="mRNA"/>
</dbReference>
<dbReference type="EMBL" id="AK291777">
    <property type="protein sequence ID" value="BAF84466.1"/>
    <property type="molecule type" value="mRNA"/>
</dbReference>
<dbReference type="EMBL" id="AK292931">
    <property type="protein sequence ID" value="BAF85620.1"/>
    <property type="molecule type" value="mRNA"/>
</dbReference>
<dbReference type="EMBL" id="AK301834">
    <property type="protein sequence ID" value="BAG63278.1"/>
    <property type="molecule type" value="mRNA"/>
</dbReference>
<dbReference type="EMBL" id="AK316134">
    <property type="protein sequence ID" value="BAH14505.1"/>
    <property type="molecule type" value="mRNA"/>
</dbReference>
<dbReference type="EMBL" id="AK316239">
    <property type="protein sequence ID" value="BAH14610.1"/>
    <property type="molecule type" value="mRNA"/>
</dbReference>
<dbReference type="EMBL" id="AC022073">
    <property type="status" value="NOT_ANNOTATED_CDS"/>
    <property type="molecule type" value="Genomic_DNA"/>
</dbReference>
<dbReference type="EMBL" id="AC073651">
    <property type="status" value="NOT_ANNOTATED_CDS"/>
    <property type="molecule type" value="Genomic_DNA"/>
</dbReference>
<dbReference type="EMBL" id="AC092753">
    <property type="status" value="NOT_ANNOTATED_CDS"/>
    <property type="molecule type" value="Genomic_DNA"/>
</dbReference>
<dbReference type="EMBL" id="CH471094">
    <property type="protein sequence ID" value="EAW96354.1"/>
    <property type="molecule type" value="Genomic_DNA"/>
</dbReference>
<dbReference type="EMBL" id="CH471094">
    <property type="protein sequence ID" value="EAW96355.1"/>
    <property type="molecule type" value="Genomic_DNA"/>
</dbReference>
<dbReference type="EMBL" id="BC030010">
    <property type="protein sequence ID" value="AAH30010.1"/>
    <property type="molecule type" value="mRNA"/>
</dbReference>
<dbReference type="CCDS" id="CCDS31753.1">
    <molecule id="Q12929-1"/>
</dbReference>
<dbReference type="PIR" id="I38728">
    <property type="entry name" value="I38728"/>
</dbReference>
<dbReference type="RefSeq" id="NP_001400761.1">
    <molecule id="Q12929-1"/>
    <property type="nucleotide sequence ID" value="NM_001413832.1"/>
</dbReference>
<dbReference type="RefSeq" id="NP_001400762.1">
    <molecule id="Q12929-1"/>
    <property type="nucleotide sequence ID" value="NM_001413833.1"/>
</dbReference>
<dbReference type="RefSeq" id="NP_001400763.1">
    <molecule id="Q12929-1"/>
    <property type="nucleotide sequence ID" value="NM_001413834.1"/>
</dbReference>
<dbReference type="RefSeq" id="NP_001400767.1">
    <molecule id="Q12929-2"/>
    <property type="nucleotide sequence ID" value="NM_001413838.1"/>
</dbReference>
<dbReference type="RefSeq" id="NP_004438.3">
    <molecule id="Q12929-1"/>
    <property type="nucleotide sequence ID" value="NM_004447.5"/>
</dbReference>
<dbReference type="RefSeq" id="XP_024304650.1">
    <molecule id="Q12929-1"/>
    <property type="nucleotide sequence ID" value="XM_024448882.2"/>
</dbReference>
<dbReference type="RefSeq" id="XP_047284451.1">
    <molecule id="Q12929-1"/>
    <property type="nucleotide sequence ID" value="XM_047428495.1"/>
</dbReference>
<dbReference type="RefSeq" id="XP_047284452.1">
    <molecule id="Q12929-1"/>
    <property type="nucleotide sequence ID" value="XM_047428496.1"/>
</dbReference>
<dbReference type="RefSeq" id="XP_047284453.1">
    <molecule id="Q12929-1"/>
    <property type="nucleotide sequence ID" value="XM_047428497.1"/>
</dbReference>
<dbReference type="RefSeq" id="XP_047284454.1">
    <molecule id="Q12929-1"/>
    <property type="nucleotide sequence ID" value="XM_047428498.1"/>
</dbReference>
<dbReference type="RefSeq" id="XP_047284455.1">
    <molecule id="Q12929-1"/>
    <property type="nucleotide sequence ID" value="XM_047428499.1"/>
</dbReference>
<dbReference type="RefSeq" id="XP_054227378.1">
    <molecule id="Q12929-1"/>
    <property type="nucleotide sequence ID" value="XM_054371403.1"/>
</dbReference>
<dbReference type="RefSeq" id="XP_054227379.1">
    <molecule id="Q12929-1"/>
    <property type="nucleotide sequence ID" value="XM_054371404.1"/>
</dbReference>
<dbReference type="RefSeq" id="XP_054227380.1">
    <molecule id="Q12929-1"/>
    <property type="nucleotide sequence ID" value="XM_054371405.1"/>
</dbReference>
<dbReference type="RefSeq" id="XP_054227381.1">
    <molecule id="Q12929-1"/>
    <property type="nucleotide sequence ID" value="XM_054371406.1"/>
</dbReference>
<dbReference type="RefSeq" id="XP_054227382.1">
    <molecule id="Q12929-1"/>
    <property type="nucleotide sequence ID" value="XM_054371407.1"/>
</dbReference>
<dbReference type="PDB" id="2E8M">
    <property type="method" value="NMR"/>
    <property type="chains" value="A=699-784"/>
</dbReference>
<dbReference type="PDB" id="7TZK">
    <property type="method" value="X-ray"/>
    <property type="resolution" value="1.43 A"/>
    <property type="chains" value="A/B=531-591"/>
</dbReference>
<dbReference type="PDBsum" id="2E8M"/>
<dbReference type="PDBsum" id="7TZK"/>
<dbReference type="SMR" id="Q12929"/>
<dbReference type="BioGRID" id="108373">
    <property type="interactions" value="107"/>
</dbReference>
<dbReference type="CORUM" id="Q12929"/>
<dbReference type="DIP" id="DIP-32859N"/>
<dbReference type="FunCoup" id="Q12929">
    <property type="interactions" value="494"/>
</dbReference>
<dbReference type="IntAct" id="Q12929">
    <property type="interactions" value="80"/>
</dbReference>
<dbReference type="MINT" id="Q12929"/>
<dbReference type="STRING" id="9606.ENSP00000494689"/>
<dbReference type="GlyGen" id="Q12929">
    <property type="glycosylation" value="2 sites, 2 O-linked glycans (1 site)"/>
</dbReference>
<dbReference type="iPTMnet" id="Q12929"/>
<dbReference type="MetOSite" id="Q12929"/>
<dbReference type="PhosphoSitePlus" id="Q12929"/>
<dbReference type="BioMuta" id="EPS8"/>
<dbReference type="DMDM" id="2833239"/>
<dbReference type="jPOST" id="Q12929"/>
<dbReference type="MassIVE" id="Q12929"/>
<dbReference type="PaxDb" id="9606-ENSP00000281172"/>
<dbReference type="PeptideAtlas" id="Q12929"/>
<dbReference type="ProteomicsDB" id="5414"/>
<dbReference type="ProteomicsDB" id="59033">
    <molecule id="Q12929-1"/>
</dbReference>
<dbReference type="Antibodypedia" id="1288">
    <property type="antibodies" value="376 antibodies from 38 providers"/>
</dbReference>
<dbReference type="DNASU" id="2059"/>
<dbReference type="Ensembl" id="ENST00000281172.10">
    <molecule id="Q12929-1"/>
    <property type="protein sequence ID" value="ENSP00000281172.5"/>
    <property type="gene ID" value="ENSG00000151491.14"/>
</dbReference>
<dbReference type="Ensembl" id="ENST00000540613.5">
    <molecule id="Q12929-2"/>
    <property type="protein sequence ID" value="ENSP00000441888.1"/>
    <property type="gene ID" value="ENSG00000151491.14"/>
</dbReference>
<dbReference type="Ensembl" id="ENST00000542903.1">
    <molecule id="Q12929-2"/>
    <property type="protein sequence ID" value="ENSP00000437806.1"/>
    <property type="gene ID" value="ENSG00000151491.14"/>
</dbReference>
<dbReference type="Ensembl" id="ENST00000543523.5">
    <molecule id="Q12929-1"/>
    <property type="protein sequence ID" value="ENSP00000441867.1"/>
    <property type="gene ID" value="ENSG00000151491.14"/>
</dbReference>
<dbReference type="Ensembl" id="ENST00000543612.5">
    <molecule id="Q12929-1"/>
    <property type="protein sequence ID" value="ENSP00000442388.1"/>
    <property type="gene ID" value="ENSG00000151491.14"/>
</dbReference>
<dbReference type="Ensembl" id="ENST00000642278.1">
    <molecule id="Q12929-1"/>
    <property type="protein sequence ID" value="ENSP00000494689.1"/>
    <property type="gene ID" value="ENSG00000151491.14"/>
</dbReference>
<dbReference type="Ensembl" id="ENST00000644374.1">
    <molecule id="Q12929-1"/>
    <property type="protein sequence ID" value="ENSP00000495956.1"/>
    <property type="gene ID" value="ENSG00000151491.14"/>
</dbReference>
<dbReference type="Ensembl" id="ENST00000645775.1">
    <molecule id="Q12929-1"/>
    <property type="protein sequence ID" value="ENSP00000495824.1"/>
    <property type="gene ID" value="ENSG00000151491.14"/>
</dbReference>
<dbReference type="Ensembl" id="ENST00000646828.1">
    <molecule id="Q12929-1"/>
    <property type="protein sequence ID" value="ENSP00000494842.1"/>
    <property type="gene ID" value="ENSG00000151491.14"/>
</dbReference>
<dbReference type="Ensembl" id="ENST00000646918.1">
    <molecule id="Q12929-1"/>
    <property type="protein sequence ID" value="ENSP00000495722.1"/>
    <property type="gene ID" value="ENSG00000151491.14"/>
</dbReference>
<dbReference type="Ensembl" id="ENST00000647087.1">
    <molecule id="Q12929-1"/>
    <property type="protein sequence ID" value="ENSP00000496406.1"/>
    <property type="gene ID" value="ENSG00000151491.14"/>
</dbReference>
<dbReference type="Ensembl" id="ENST00000647224.1">
    <molecule id="Q12929-1"/>
    <property type="protein sequence ID" value="ENSP00000496516.1"/>
    <property type="gene ID" value="ENSG00000151491.14"/>
</dbReference>
<dbReference type="GeneID" id="2059"/>
<dbReference type="KEGG" id="hsa:2059"/>
<dbReference type="MANE-Select" id="ENST00000281172.10">
    <property type="protein sequence ID" value="ENSP00000281172.5"/>
    <property type="RefSeq nucleotide sequence ID" value="NM_004447.6"/>
    <property type="RefSeq protein sequence ID" value="NP_004438.3"/>
</dbReference>
<dbReference type="UCSC" id="uc001rdb.4">
    <molecule id="Q12929-1"/>
    <property type="organism name" value="human"/>
</dbReference>
<dbReference type="AGR" id="HGNC:3420"/>
<dbReference type="CTD" id="2059"/>
<dbReference type="DisGeNET" id="2059"/>
<dbReference type="GeneCards" id="EPS8"/>
<dbReference type="HGNC" id="HGNC:3420">
    <property type="gene designation" value="EPS8"/>
</dbReference>
<dbReference type="HPA" id="ENSG00000151491">
    <property type="expression patterns" value="Low tissue specificity"/>
</dbReference>
<dbReference type="MalaCards" id="EPS8"/>
<dbReference type="MIM" id="600206">
    <property type="type" value="gene"/>
</dbReference>
<dbReference type="MIM" id="615974">
    <property type="type" value="phenotype"/>
</dbReference>
<dbReference type="neXtProt" id="NX_Q12929"/>
<dbReference type="OpenTargets" id="ENSG00000151491"/>
<dbReference type="Orphanet" id="90636">
    <property type="disease" value="Rare autosomal recessive non-syndromic sensorineural deafness type DFNB"/>
</dbReference>
<dbReference type="PharmGKB" id="PA27839"/>
<dbReference type="VEuPathDB" id="HostDB:ENSG00000151491"/>
<dbReference type="eggNOG" id="KOG3557">
    <property type="taxonomic scope" value="Eukaryota"/>
</dbReference>
<dbReference type="GeneTree" id="ENSGT00940000156403"/>
<dbReference type="HOGENOM" id="CLU_014510_0_0_1"/>
<dbReference type="InParanoid" id="Q12929"/>
<dbReference type="OMA" id="NKNWWEC"/>
<dbReference type="OrthoDB" id="4680325at2759"/>
<dbReference type="PAN-GO" id="Q12929">
    <property type="GO annotations" value="6 GO annotations based on evolutionary models"/>
</dbReference>
<dbReference type="PhylomeDB" id="Q12929"/>
<dbReference type="TreeFam" id="TF313069"/>
<dbReference type="PathwayCommons" id="Q12929"/>
<dbReference type="Reactome" id="R-HSA-9662360">
    <property type="pathway name" value="Sensory processing of sound by inner hair cells of the cochlea"/>
</dbReference>
<dbReference type="Reactome" id="R-HSA-9662361">
    <property type="pathway name" value="Sensory processing of sound by outer hair cells of the cochlea"/>
</dbReference>
<dbReference type="SignaLink" id="Q12929"/>
<dbReference type="SIGNOR" id="Q12929"/>
<dbReference type="BioGRID-ORCS" id="2059">
    <property type="hits" value="10 hits in 1147 CRISPR screens"/>
</dbReference>
<dbReference type="CD-CODE" id="FF4792F2">
    <property type="entry name" value="Row 1-specific tip complex condensates"/>
</dbReference>
<dbReference type="ChiTaRS" id="EPS8">
    <property type="organism name" value="human"/>
</dbReference>
<dbReference type="EvolutionaryTrace" id="Q12929"/>
<dbReference type="GeneWiki" id="EPS8"/>
<dbReference type="GenomeRNAi" id="2059"/>
<dbReference type="Pharos" id="Q12929">
    <property type="development level" value="Tbio"/>
</dbReference>
<dbReference type="PRO" id="PR:Q12929"/>
<dbReference type="Proteomes" id="UP000005640">
    <property type="component" value="Chromosome 12"/>
</dbReference>
<dbReference type="RNAct" id="Q12929">
    <property type="molecule type" value="protein"/>
</dbReference>
<dbReference type="Bgee" id="ENSG00000151491">
    <property type="expression patterns" value="Expressed in jejunal mucosa and 214 other cell types or tissues"/>
</dbReference>
<dbReference type="ExpressionAtlas" id="Q12929">
    <property type="expression patterns" value="baseline and differential"/>
</dbReference>
<dbReference type="GO" id="GO:0005903">
    <property type="term" value="C:brush border"/>
    <property type="evidence" value="ECO:0007669"/>
    <property type="project" value="Ensembl"/>
</dbReference>
<dbReference type="GO" id="GO:0005938">
    <property type="term" value="C:cell cortex"/>
    <property type="evidence" value="ECO:0000250"/>
    <property type="project" value="UniProtKB"/>
</dbReference>
<dbReference type="GO" id="GO:0070062">
    <property type="term" value="C:extracellular exosome"/>
    <property type="evidence" value="ECO:0007005"/>
    <property type="project" value="UniProtKB"/>
</dbReference>
<dbReference type="GO" id="GO:0098978">
    <property type="term" value="C:glutamatergic synapse"/>
    <property type="evidence" value="ECO:0007669"/>
    <property type="project" value="Ensembl"/>
</dbReference>
<dbReference type="GO" id="GO:0030426">
    <property type="term" value="C:growth cone"/>
    <property type="evidence" value="ECO:0007669"/>
    <property type="project" value="UniProtKB-SubCell"/>
</dbReference>
<dbReference type="GO" id="GO:0017146">
    <property type="term" value="C:NMDA selective glutamate receptor complex"/>
    <property type="evidence" value="ECO:0007669"/>
    <property type="project" value="Ensembl"/>
</dbReference>
<dbReference type="GO" id="GO:0005886">
    <property type="term" value="C:plasma membrane"/>
    <property type="evidence" value="ECO:0000318"/>
    <property type="project" value="GO_Central"/>
</dbReference>
<dbReference type="GO" id="GO:0014069">
    <property type="term" value="C:postsynaptic density"/>
    <property type="evidence" value="ECO:0007669"/>
    <property type="project" value="Ensembl"/>
</dbReference>
<dbReference type="GO" id="GO:0032587">
    <property type="term" value="C:ruffle membrane"/>
    <property type="evidence" value="ECO:0000250"/>
    <property type="project" value="UniProtKB"/>
</dbReference>
<dbReference type="GO" id="GO:0032420">
    <property type="term" value="C:stereocilium"/>
    <property type="evidence" value="ECO:0000250"/>
    <property type="project" value="UniProtKB"/>
</dbReference>
<dbReference type="GO" id="GO:0032426">
    <property type="term" value="C:stereocilium tip"/>
    <property type="evidence" value="ECO:0007669"/>
    <property type="project" value="Ensembl"/>
</dbReference>
<dbReference type="GO" id="GO:0031982">
    <property type="term" value="C:vesicle"/>
    <property type="evidence" value="ECO:0007005"/>
    <property type="project" value="UniProtKB"/>
</dbReference>
<dbReference type="GO" id="GO:0003779">
    <property type="term" value="F:actin binding"/>
    <property type="evidence" value="ECO:0000250"/>
    <property type="project" value="UniProtKB"/>
</dbReference>
<dbReference type="GO" id="GO:0031267">
    <property type="term" value="F:small GTPase binding"/>
    <property type="evidence" value="ECO:0000250"/>
    <property type="project" value="UniProtKB"/>
</dbReference>
<dbReference type="GO" id="GO:0051764">
    <property type="term" value="P:actin crosslink formation"/>
    <property type="evidence" value="ECO:0000250"/>
    <property type="project" value="UniProtKB"/>
</dbReference>
<dbReference type="GO" id="GO:0051017">
    <property type="term" value="P:actin filament bundle assembly"/>
    <property type="evidence" value="ECO:0000250"/>
    <property type="project" value="UniProtKB"/>
</dbReference>
<dbReference type="GO" id="GO:0070358">
    <property type="term" value="P:actin polymerization-dependent cell motility"/>
    <property type="evidence" value="ECO:0000250"/>
    <property type="project" value="UniProtKB"/>
</dbReference>
<dbReference type="GO" id="GO:0008344">
    <property type="term" value="P:adult locomotory behavior"/>
    <property type="evidence" value="ECO:0007669"/>
    <property type="project" value="Ensembl"/>
</dbReference>
<dbReference type="GO" id="GO:0051016">
    <property type="term" value="P:barbed-end actin filament capping"/>
    <property type="evidence" value="ECO:0000250"/>
    <property type="project" value="UniProtKB"/>
</dbReference>
<dbReference type="GO" id="GO:0048149">
    <property type="term" value="P:behavioral response to ethanol"/>
    <property type="evidence" value="ECO:0007669"/>
    <property type="project" value="Ensembl"/>
</dbReference>
<dbReference type="GO" id="GO:1990830">
    <property type="term" value="P:cellular response to leukemia inhibitory factor"/>
    <property type="evidence" value="ECO:0007669"/>
    <property type="project" value="Ensembl"/>
</dbReference>
<dbReference type="GO" id="GO:0036336">
    <property type="term" value="P:dendritic cell migration"/>
    <property type="evidence" value="ECO:0000250"/>
    <property type="project" value="UniProtKB"/>
</dbReference>
<dbReference type="GO" id="GO:0010458">
    <property type="term" value="P:exit from mitosis"/>
    <property type="evidence" value="ECO:0000250"/>
    <property type="project" value="UniProtKB"/>
</dbReference>
<dbReference type="GO" id="GO:1900029">
    <property type="term" value="P:positive regulation of ruffle assembly"/>
    <property type="evidence" value="ECO:0000318"/>
    <property type="project" value="GO_Central"/>
</dbReference>
<dbReference type="GO" id="GO:0016601">
    <property type="term" value="P:Rac protein signal transduction"/>
    <property type="evidence" value="ECO:0000250"/>
    <property type="project" value="UniProtKB"/>
</dbReference>
<dbReference type="GO" id="GO:0030832">
    <property type="term" value="P:regulation of actin filament length"/>
    <property type="evidence" value="ECO:0000250"/>
    <property type="project" value="UniProtKB"/>
</dbReference>
<dbReference type="GO" id="GO:0008360">
    <property type="term" value="P:regulation of cell shape"/>
    <property type="evidence" value="ECO:0000250"/>
    <property type="project" value="UniProtKB"/>
</dbReference>
<dbReference type="GO" id="GO:0099072">
    <property type="term" value="P:regulation of postsynaptic membrane neurotransmitter receptor levels"/>
    <property type="evidence" value="ECO:0007669"/>
    <property type="project" value="Ensembl"/>
</dbReference>
<dbReference type="GO" id="GO:0035023">
    <property type="term" value="P:regulation of Rho protein signal transduction"/>
    <property type="evidence" value="ECO:0000318"/>
    <property type="project" value="GO_Central"/>
</dbReference>
<dbReference type="GO" id="GO:0007266">
    <property type="term" value="P:Rho protein signal transduction"/>
    <property type="evidence" value="ECO:0000318"/>
    <property type="project" value="GO_Central"/>
</dbReference>
<dbReference type="CDD" id="cd01210">
    <property type="entry name" value="PTB_EPS8"/>
    <property type="match status" value="1"/>
</dbReference>
<dbReference type="CDD" id="cd09540">
    <property type="entry name" value="SAM_EPS8-like"/>
    <property type="match status" value="1"/>
</dbReference>
<dbReference type="CDD" id="cd11764">
    <property type="entry name" value="SH3_Eps8"/>
    <property type="match status" value="1"/>
</dbReference>
<dbReference type="FunFam" id="1.10.150.50:FF:000023">
    <property type="entry name" value="Epidermal growth factor receptor kinase substrate 8"/>
    <property type="match status" value="1"/>
</dbReference>
<dbReference type="FunFam" id="2.30.30.40:FF:000071">
    <property type="entry name" value="Epidermal growth factor receptor kinase substrate 8"/>
    <property type="match status" value="1"/>
</dbReference>
<dbReference type="FunFam" id="2.30.29.30:FF:000174">
    <property type="entry name" value="epidermal growth factor receptor kinase substrate 8"/>
    <property type="match status" value="1"/>
</dbReference>
<dbReference type="Gene3D" id="2.30.29.30">
    <property type="entry name" value="Pleckstrin-homology domain (PH domain)/Phosphotyrosine-binding domain (PTB)"/>
    <property type="match status" value="1"/>
</dbReference>
<dbReference type="Gene3D" id="2.30.30.40">
    <property type="entry name" value="SH3 Domains"/>
    <property type="match status" value="1"/>
</dbReference>
<dbReference type="Gene3D" id="1.10.150.50">
    <property type="entry name" value="Transcription Factor, Ets-1"/>
    <property type="match status" value="1"/>
</dbReference>
<dbReference type="InterPro" id="IPR039801">
    <property type="entry name" value="EPS8-like"/>
</dbReference>
<dbReference type="InterPro" id="IPR055093">
    <property type="entry name" value="EPS8_2nd"/>
</dbReference>
<dbReference type="InterPro" id="IPR033928">
    <property type="entry name" value="EPS8_PTB"/>
</dbReference>
<dbReference type="InterPro" id="IPR035462">
    <property type="entry name" value="Eps8_SH3"/>
</dbReference>
<dbReference type="InterPro" id="IPR011993">
    <property type="entry name" value="PH-like_dom_sf"/>
</dbReference>
<dbReference type="InterPro" id="IPR013625">
    <property type="entry name" value="PTB"/>
</dbReference>
<dbReference type="InterPro" id="IPR006020">
    <property type="entry name" value="PTB/PI_dom"/>
</dbReference>
<dbReference type="InterPro" id="IPR013761">
    <property type="entry name" value="SAM/pointed_sf"/>
</dbReference>
<dbReference type="InterPro" id="IPR041418">
    <property type="entry name" value="SAM_3"/>
</dbReference>
<dbReference type="InterPro" id="IPR036028">
    <property type="entry name" value="SH3-like_dom_sf"/>
</dbReference>
<dbReference type="InterPro" id="IPR001452">
    <property type="entry name" value="SH3_domain"/>
</dbReference>
<dbReference type="PANTHER" id="PTHR12287:SF21">
    <property type="entry name" value="EPIDERMAL GROWTH FACTOR RECEPTOR KINASE SUBSTRATE 8"/>
    <property type="match status" value="1"/>
</dbReference>
<dbReference type="PANTHER" id="PTHR12287">
    <property type="entry name" value="EPIDERMAL GROWTH FACTOR RECEPTOR KINASE SUBSTRATE EPS8-RELATED PROTEIN"/>
    <property type="match status" value="1"/>
</dbReference>
<dbReference type="Pfam" id="PF22975">
    <property type="entry name" value="EPS8_2nd"/>
    <property type="match status" value="1"/>
</dbReference>
<dbReference type="Pfam" id="PF08416">
    <property type="entry name" value="PTB"/>
    <property type="match status" value="1"/>
</dbReference>
<dbReference type="Pfam" id="PF18016">
    <property type="entry name" value="SAM_3"/>
    <property type="match status" value="1"/>
</dbReference>
<dbReference type="Pfam" id="PF00018">
    <property type="entry name" value="SH3_1"/>
    <property type="match status" value="1"/>
</dbReference>
<dbReference type="SMART" id="SM00462">
    <property type="entry name" value="PTB"/>
    <property type="match status" value="1"/>
</dbReference>
<dbReference type="SMART" id="SM00326">
    <property type="entry name" value="SH3"/>
    <property type="match status" value="1"/>
</dbReference>
<dbReference type="SUPFAM" id="SSF50729">
    <property type="entry name" value="PH domain-like"/>
    <property type="match status" value="1"/>
</dbReference>
<dbReference type="SUPFAM" id="SSF50044">
    <property type="entry name" value="SH3-domain"/>
    <property type="match status" value="1"/>
</dbReference>
<dbReference type="PROSITE" id="PS50002">
    <property type="entry name" value="SH3"/>
    <property type="match status" value="1"/>
</dbReference>
<evidence type="ECO:0000250" key="1"/>
<evidence type="ECO:0000250" key="2">
    <source>
        <dbReference type="UniProtKB" id="F1M3L7"/>
    </source>
</evidence>
<evidence type="ECO:0000250" key="3">
    <source>
        <dbReference type="UniProtKB" id="Q08509"/>
    </source>
</evidence>
<evidence type="ECO:0000255" key="4"/>
<evidence type="ECO:0000255" key="5">
    <source>
        <dbReference type="PROSITE-ProRule" id="PRU00192"/>
    </source>
</evidence>
<evidence type="ECO:0000256" key="6">
    <source>
        <dbReference type="SAM" id="MobiDB-lite"/>
    </source>
</evidence>
<evidence type="ECO:0000269" key="7">
    <source>
    </source>
</evidence>
<evidence type="ECO:0000269" key="8">
    <source>
    </source>
</evidence>
<evidence type="ECO:0000269" key="9">
    <source>
    </source>
</evidence>
<evidence type="ECO:0000269" key="10">
    <source>
    </source>
</evidence>
<evidence type="ECO:0000269" key="11">
    <source>
    </source>
</evidence>
<evidence type="ECO:0000269" key="12">
    <source>
    </source>
</evidence>
<evidence type="ECO:0000269" key="13">
    <source>
    </source>
</evidence>
<evidence type="ECO:0000269" key="14">
    <source>
    </source>
</evidence>
<evidence type="ECO:0000269" key="15">
    <source>
    </source>
</evidence>
<evidence type="ECO:0000269" key="16">
    <source>
    </source>
</evidence>
<evidence type="ECO:0000269" key="17">
    <source>
    </source>
</evidence>
<evidence type="ECO:0000303" key="18">
    <source>
    </source>
</evidence>
<evidence type="ECO:0000305" key="19"/>
<evidence type="ECO:0007744" key="20">
    <source>
    </source>
</evidence>
<evidence type="ECO:0007744" key="21">
    <source>
    </source>
</evidence>
<evidence type="ECO:0007829" key="22">
    <source>
        <dbReference type="PDB" id="2E8M"/>
    </source>
</evidence>
<evidence type="ECO:0007829" key="23">
    <source>
        <dbReference type="PDB" id="7TZK"/>
    </source>
</evidence>
<name>EPS8_HUMAN</name>
<sequence>MNGHISNHPSSFGMYPSQMNGYGSSPTFSQTDREHGSKTSAKALYEQRKNYARDSVSSVSDISQYRVEHLTTFVLDRKDAMITVDDGIRKLKLLDAKGKVWTQDMILQVDDRAVSLIDLESKNELENFPLNTIQHCQAVMHSCSYDSVLALVCKEPTQNKPDLHLFQCDEVKANLISEDIESAISDSKGGKQKRRPDALRMISNADPSIPPPPRAPAPAPPGTVTQVDVRSRVAAWSAWAADQGDFEKPRQYHEQEETPEMMAARIDRDVQILNHILDDIEFFITKLQKAAEAFSELSKRKKNKKGKRKGPGEGVLTLRAKPPPPDEFLDCFQKFKHGFNLLAKLKSHIQNPSAADLVHFLFTPLNMVVQATGGPELASSVLSPLLNKDTIDFLNYTVNGDERQLWMSLGGTWMKARAEWPKEQFIPPYVPRFRNGWEPPMLNFMGATMEQDLYQLAESVANVAEHQRKQEIKRLSTEHSSVSEYHPADGYAFSSNIYTRGSHLDQGEAAVAFKPTSNRHIDRNYEPLKTQPKKYAKSKYDFVARNNSELSVLKDDILEILDDRKQWWKVRNASGDSGFVPNNILDIVRPPESGLGRADPPYTHTIQKQRMEYGPRPADTPPAPSPPPTPAPVPVPLPPSTPAPVPVSKVPANITRQNSSSSDSGGSIVRDSQRHKQLPVDRRKSQMEEVQDELIHRLTIGRSAAQKKFHVPRQNVPVINITYDSTPEDVKTWLQSKGFNPVTVNSLGVLNGAQLFSLNKDELRTVCPEGARVYSQITVQKAALEDSSGSSELQEIMRRRQEKISAAASDSGVESFDEGSSH</sequence>
<comment type="function">
    <text evidence="9 10">Signaling adapter that controls various cellular protrusions by regulating actin cytoskeleton dynamics and architecture. Depending on its association with other signal transducers, can regulate different processes. Together with SOS1 and ABI1, forms a trimeric complex that participates in transduction of signals from Ras to Rac by activating the Rac-specific guanine nucleotide exchange factor (GEF) activity. Acts as a direct regulator of actin dynamics by binding actin filaments and has both barbed-end actin filament capping and actin bundling activities depending on the context. Displays barbed-end actin capping activity when associated with ABI1, thereby regulating actin-based motility process: capping activity is auto-inhibited and inhibition is relieved upon ABI1 interaction. Also shows actin bundling activity when associated with BAIAP2, enhancing BAIAP2-dependent membrane extensions and promoting filopodial protrusions. Involved in the regulation of processes such as axonal filopodia growth, stereocilia length, dendritic cell migration and cancer cell migration and invasion. Acts as a regulator of axonal filopodia formation in neurons: in the absence of neurotrophic factors, negatively regulates axonal filopodia formation via actin-capping activity. In contrast, it is phosphorylated in the presence of BDNF leading to inhibition of its actin-capping activity and stimulation of filopodia formation. Component of a complex with WHRN and MYO15A that localizes at stereocilia tips and is required for elongation of the stereocilia actin core. Indirectly involved in cell cycle progression; its degradation following ubiquitination being required during G2 phase to promote cell shape changes.</text>
</comment>
<comment type="subunit">
    <text evidence="1 8 17">Homodimer. Part of a complex consisting of ABI1, EPS8 and SOS1. Interacts with MYO15A and WHRN. Interacts with LANCL1 (By similarity). Interacts with EGFR; mediates EPS8 phosphorylation (By similarity). Interacts with BAIAP2. Interacts with SHB.</text>
</comment>
<comment type="interaction">
    <interactant intactId="EBI-375576">
        <id>Q12929</id>
    </interactant>
    <interactant intactId="EBI-726842">
        <id>P49419</id>
        <label>ALDH7A1</label>
    </interactant>
    <organismsDiffer>false</organismsDiffer>
    <experiments>2</experiments>
</comment>
<comment type="interaction">
    <interactant intactId="EBI-375576">
        <id>Q12929</id>
    </interactant>
    <interactant intactId="EBI-525456">
        <id>Q9UQB8</id>
        <label>BAIAP2</label>
    </interactant>
    <organismsDiffer>false</organismsDiffer>
    <experiments>12</experiments>
</comment>
<comment type="interaction">
    <interactant intactId="EBI-375576">
        <id>Q12929</id>
    </interactant>
    <interactant intactId="EBI-6174091">
        <id>Q9UQB8-4</id>
        <label>BAIAP2</label>
    </interactant>
    <organismsDiffer>false</organismsDiffer>
    <experiments>4</experiments>
</comment>
<comment type="interaction">
    <interactant intactId="EBI-375576">
        <id>Q12929</id>
    </interactant>
    <interactant intactId="EBI-2483278">
        <id>Q9UHR4</id>
        <label>BAIAP2L1</label>
    </interactant>
    <organismsDiffer>false</organismsDiffer>
    <experiments>4</experiments>
</comment>
<comment type="interaction">
    <interactant intactId="EBI-375576">
        <id>Q12929</id>
    </interactant>
    <interactant intactId="EBI-10193358">
        <id>Q96GS4</id>
        <label>BORCS6</label>
    </interactant>
    <organismsDiffer>false</organismsDiffer>
    <experiments>3</experiments>
</comment>
<comment type="interaction">
    <interactant intactId="EBI-375576">
        <id>Q12929</id>
    </interactant>
    <interactant intactId="EBI-358049">
        <id>Q13895</id>
        <label>BYSL</label>
    </interactant>
    <organismsDiffer>false</organismsDiffer>
    <experiments>3</experiments>
</comment>
<comment type="interaction">
    <interactant intactId="EBI-375576">
        <id>Q12929</id>
    </interactant>
    <interactant intactId="EBI-741214">
        <id>Q9UFG5</id>
        <label>C19orf25</label>
    </interactant>
    <organismsDiffer>false</organismsDiffer>
    <experiments>3</experiments>
</comment>
<comment type="interaction">
    <interactant intactId="EBI-375576">
        <id>Q12929</id>
    </interactant>
    <interactant intactId="EBI-1215506">
        <id>O14936</id>
        <label>CASK</label>
    </interactant>
    <organismsDiffer>false</organismsDiffer>
    <experiments>3</experiments>
</comment>
<comment type="interaction">
    <interactant intactId="EBI-375576">
        <id>Q12929</id>
    </interactant>
    <interactant intactId="EBI-297353">
        <id>P00533</id>
        <label>EGFR</label>
    </interactant>
    <organismsDiffer>false</organismsDiffer>
    <experiments>4</experiments>
</comment>
<comment type="interaction">
    <interactant intactId="EBI-375576">
        <id>Q12929</id>
    </interactant>
    <interactant intactId="EBI-16031873">
        <id>Q969U6-1</id>
        <label>FBXW5</label>
    </interactant>
    <organismsDiffer>false</organismsDiffer>
    <experiments>3</experiments>
</comment>
<comment type="interaction">
    <interactant intactId="EBI-375576">
        <id>Q12929</id>
    </interactant>
    <interactant intactId="EBI-10181276">
        <id>Q0D2H9</id>
        <label>GOLGA8DP</label>
    </interactant>
    <organismsDiffer>false</organismsDiffer>
    <experiments>3</experiments>
</comment>
<comment type="interaction">
    <interactant intactId="EBI-375576">
        <id>Q12929</id>
    </interactant>
    <interactant intactId="EBI-401755">
        <id>P62993</id>
        <label>GRB2</label>
    </interactant>
    <organismsDiffer>false</organismsDiffer>
    <experiments>3</experiments>
</comment>
<comment type="interaction">
    <interactant intactId="EBI-375576">
        <id>Q12929</id>
    </interactant>
    <interactant intactId="EBI-357966">
        <id>P07910</id>
        <label>HNRNPC</label>
    </interactant>
    <organismsDiffer>false</organismsDiffer>
    <experiments>3</experiments>
</comment>
<comment type="interaction">
    <interactant intactId="EBI-375576">
        <id>Q12929</id>
    </interactant>
    <interactant intactId="EBI-10236940">
        <id>Q15735</id>
        <label>INPP5J</label>
    </interactant>
    <organismsDiffer>false</organismsDiffer>
    <experiments>3</experiments>
</comment>
<comment type="interaction">
    <interactant intactId="EBI-375576">
        <id>Q12929</id>
    </interactant>
    <interactant intactId="EBI-10224192">
        <id>Q06455-4</id>
        <label>RUNX1T1</label>
    </interactant>
    <organismsDiffer>false</organismsDiffer>
    <experiments>3</experiments>
</comment>
<comment type="interaction">
    <interactant intactId="EBI-375576">
        <id>Q12929</id>
    </interactant>
    <interactant intactId="EBI-455078">
        <id>Q969G3</id>
        <label>SMARCE1</label>
    </interactant>
    <organismsDiffer>false</organismsDiffer>
    <experiments>3</experiments>
</comment>
<comment type="subcellular location">
    <subcellularLocation>
        <location evidence="1">Cytoplasm</location>
        <location evidence="1">Cell cortex</location>
    </subcellularLocation>
    <subcellularLocation>
        <location evidence="1">Cell projection</location>
        <location evidence="1">Ruffle membrane</location>
    </subcellularLocation>
    <subcellularLocation>
        <location evidence="1">Cell projection</location>
        <location evidence="1">Growth cone</location>
    </subcellularLocation>
    <subcellularLocation>
        <location evidence="1 3">Cell projection</location>
        <location evidence="1 3">Stereocilium</location>
    </subcellularLocation>
    <subcellularLocation>
        <location evidence="1">Synapse</location>
        <location evidence="1">Synaptosome</location>
    </subcellularLocation>
    <text evidence="1 3">Localizes at the tips of the stereocilia of the inner and outer hair cells (By similarity). Localizes to the midzone of dividing cells.</text>
</comment>
<comment type="alternative products">
    <event type="alternative splicing"/>
    <isoform>
        <id>Q12929-1</id>
        <name>1</name>
        <sequence type="displayed"/>
    </isoform>
    <isoform>
        <id>Q12929-2</id>
        <name>2</name>
        <sequence type="described" ref="VSP_056460"/>
    </isoform>
</comment>
<comment type="tissue specificity">
    <text>Expressed in all tissues analyzed, including heart, brain, placenta, lung, liver, skeletal muscle, kidney and pancreas. Expressed in all epithelial and fibroblastic lines examined and in some, but not all, hematopoietic cells.</text>
</comment>
<comment type="domain">
    <text evidence="1">The effector region is required for activating the Rac-specific guanine nucleotide exchange factor (GEF) activity. It mediates both barbed-end actin capping and actin bundling activities. The capping activity is mediated by an amphipathic helix that binds within the hydrophobic pocket at the barbed ends of actin blocking further addition of actin monomers, while the bundling activity is mediated by a compact 4 helix bundle, which contacts 3 actin subunits along the filament (By similarity).</text>
</comment>
<comment type="domain">
    <text>The SH3 domain mediates interaction with SHB.</text>
</comment>
<comment type="PTM">
    <text evidence="1">Ubiquitinated by the SCF(FBXW5) E3 ubiquitin-protein ligase complex during G2 phase, leading to its transient degradation and subsequent cell shape changes required to allow mitotic progression. Reappears at the midzone of dividing cells (By similarity).</text>
</comment>
<comment type="PTM">
    <text evidence="1">Phosphorylation at Ser-625 and Thr-629 by MAPK following BDNF treatment promotes removal from actin and filopodia formation (By similarity). Phosphorylated by several receptor tyrosine kinases.</text>
</comment>
<comment type="disease" evidence="15">
    <disease id="DI-04190">
        <name>Deafness, autosomal recessive, 102</name>
        <acronym>DFNB102</acronym>
        <description>A form of non-syndromic deafness characterized by profound hearing loss affecting all frequencies. Vestibular function is unaffected.</description>
        <dbReference type="MIM" id="615974"/>
    </disease>
    <text>The disease is caused by variants affecting the gene represented in this entry.</text>
</comment>
<comment type="disease">
    <text evidence="7 11 12 13 14">Defects in EPS8 are associated with some cancers, such as pancreatic, oral squamous cell carcinomas or pituitary cancers. Contributes to cell transformation in response to growth factor treatment and is overexpressed in a number of tumors, indicating that EPS8 levels must be tightly regulated.</text>
</comment>
<comment type="similarity">
    <text evidence="19">Belongs to the EPS8 family.</text>
</comment>
<comment type="online information" name="Atlas of Genetics and Cytogenetics in Oncology and Haematology">
    <link uri="https://atlasgeneticsoncology.org/gene/40476/EPS8"/>
</comment>
<gene>
    <name type="primary">EPS8</name>
</gene>
<reference key="1">
    <citation type="journal article" date="1994" name="Oncogene">
        <title>Evolutionary conservation of the EPS8 gene and its mapping to human chromosome 12q23-q24.</title>
        <authorList>
            <person name="Wong W.T."/>
            <person name="Carlomagno F."/>
            <person name="Druck T."/>
            <person name="Barletta C."/>
            <person name="Croce C.M."/>
            <person name="Huebner K."/>
            <person name="Kraus M.H."/>
            <person name="di Fiore P.P."/>
        </authorList>
    </citation>
    <scope>NUCLEOTIDE SEQUENCE [MRNA] (ISOFORM 1)</scope>
</reference>
<reference key="2">
    <citation type="journal article" date="2004" name="Nat. Genet.">
        <title>Complete sequencing and characterization of 21,243 full-length human cDNAs.</title>
        <authorList>
            <person name="Ota T."/>
            <person name="Suzuki Y."/>
            <person name="Nishikawa T."/>
            <person name="Otsuki T."/>
            <person name="Sugiyama T."/>
            <person name="Irie R."/>
            <person name="Wakamatsu A."/>
            <person name="Hayashi K."/>
            <person name="Sato H."/>
            <person name="Nagai K."/>
            <person name="Kimura K."/>
            <person name="Makita H."/>
            <person name="Sekine M."/>
            <person name="Obayashi M."/>
            <person name="Nishi T."/>
            <person name="Shibahara T."/>
            <person name="Tanaka T."/>
            <person name="Ishii S."/>
            <person name="Yamamoto J."/>
            <person name="Saito K."/>
            <person name="Kawai Y."/>
            <person name="Isono Y."/>
            <person name="Nakamura Y."/>
            <person name="Nagahari K."/>
            <person name="Murakami K."/>
            <person name="Yasuda T."/>
            <person name="Iwayanagi T."/>
            <person name="Wagatsuma M."/>
            <person name="Shiratori A."/>
            <person name="Sudo H."/>
            <person name="Hosoiri T."/>
            <person name="Kaku Y."/>
            <person name="Kodaira H."/>
            <person name="Kondo H."/>
            <person name="Sugawara M."/>
            <person name="Takahashi M."/>
            <person name="Kanda K."/>
            <person name="Yokoi T."/>
            <person name="Furuya T."/>
            <person name="Kikkawa E."/>
            <person name="Omura Y."/>
            <person name="Abe K."/>
            <person name="Kamihara K."/>
            <person name="Katsuta N."/>
            <person name="Sato K."/>
            <person name="Tanikawa M."/>
            <person name="Yamazaki M."/>
            <person name="Ninomiya K."/>
            <person name="Ishibashi T."/>
            <person name="Yamashita H."/>
            <person name="Murakawa K."/>
            <person name="Fujimori K."/>
            <person name="Tanai H."/>
            <person name="Kimata M."/>
            <person name="Watanabe M."/>
            <person name="Hiraoka S."/>
            <person name="Chiba Y."/>
            <person name="Ishida S."/>
            <person name="Ono Y."/>
            <person name="Takiguchi S."/>
            <person name="Watanabe S."/>
            <person name="Yosida M."/>
            <person name="Hotuta T."/>
            <person name="Kusano J."/>
            <person name="Kanehori K."/>
            <person name="Takahashi-Fujii A."/>
            <person name="Hara H."/>
            <person name="Tanase T.-O."/>
            <person name="Nomura Y."/>
            <person name="Togiya S."/>
            <person name="Komai F."/>
            <person name="Hara R."/>
            <person name="Takeuchi K."/>
            <person name="Arita M."/>
            <person name="Imose N."/>
            <person name="Musashino K."/>
            <person name="Yuuki H."/>
            <person name="Oshima A."/>
            <person name="Sasaki N."/>
            <person name="Aotsuka S."/>
            <person name="Yoshikawa Y."/>
            <person name="Matsunawa H."/>
            <person name="Ichihara T."/>
            <person name="Shiohata N."/>
            <person name="Sano S."/>
            <person name="Moriya S."/>
            <person name="Momiyama H."/>
            <person name="Satoh N."/>
            <person name="Takami S."/>
            <person name="Terashima Y."/>
            <person name="Suzuki O."/>
            <person name="Nakagawa S."/>
            <person name="Senoh A."/>
            <person name="Mizoguchi H."/>
            <person name="Goto Y."/>
            <person name="Shimizu F."/>
            <person name="Wakebe H."/>
            <person name="Hishigaki H."/>
            <person name="Watanabe T."/>
            <person name="Sugiyama A."/>
            <person name="Takemoto M."/>
            <person name="Kawakami B."/>
            <person name="Yamazaki M."/>
            <person name="Watanabe K."/>
            <person name="Kumagai A."/>
            <person name="Itakura S."/>
            <person name="Fukuzumi Y."/>
            <person name="Fujimori Y."/>
            <person name="Komiyama M."/>
            <person name="Tashiro H."/>
            <person name="Tanigami A."/>
            <person name="Fujiwara T."/>
            <person name="Ono T."/>
            <person name="Yamada K."/>
            <person name="Fujii Y."/>
            <person name="Ozaki K."/>
            <person name="Hirao M."/>
            <person name="Ohmori Y."/>
            <person name="Kawabata A."/>
            <person name="Hikiji T."/>
            <person name="Kobatake N."/>
            <person name="Inagaki H."/>
            <person name="Ikema Y."/>
            <person name="Okamoto S."/>
            <person name="Okitani R."/>
            <person name="Kawakami T."/>
            <person name="Noguchi S."/>
            <person name="Itoh T."/>
            <person name="Shigeta K."/>
            <person name="Senba T."/>
            <person name="Matsumura K."/>
            <person name="Nakajima Y."/>
            <person name="Mizuno T."/>
            <person name="Morinaga M."/>
            <person name="Sasaki M."/>
            <person name="Togashi T."/>
            <person name="Oyama M."/>
            <person name="Hata H."/>
            <person name="Watanabe M."/>
            <person name="Komatsu T."/>
            <person name="Mizushima-Sugano J."/>
            <person name="Satoh T."/>
            <person name="Shirai Y."/>
            <person name="Takahashi Y."/>
            <person name="Nakagawa K."/>
            <person name="Okumura K."/>
            <person name="Nagase T."/>
            <person name="Nomura N."/>
            <person name="Kikuchi H."/>
            <person name="Masuho Y."/>
            <person name="Yamashita R."/>
            <person name="Nakai K."/>
            <person name="Yada T."/>
            <person name="Nakamura Y."/>
            <person name="Ohara O."/>
            <person name="Isogai T."/>
            <person name="Sugano S."/>
        </authorList>
    </citation>
    <scope>NUCLEOTIDE SEQUENCE [LARGE SCALE MRNA] (ISOFORMS 1 AND 2)</scope>
    <source>
        <tissue>Placenta</tissue>
        <tissue>Testis</tissue>
        <tissue>Tongue</tissue>
        <tissue>Trachea</tissue>
    </source>
</reference>
<reference key="3">
    <citation type="journal article" date="2006" name="Nature">
        <title>The finished DNA sequence of human chromosome 12.</title>
        <authorList>
            <person name="Scherer S.E."/>
            <person name="Muzny D.M."/>
            <person name="Buhay C.J."/>
            <person name="Chen R."/>
            <person name="Cree A."/>
            <person name="Ding Y."/>
            <person name="Dugan-Rocha S."/>
            <person name="Gill R."/>
            <person name="Gunaratne P."/>
            <person name="Harris R.A."/>
            <person name="Hawes A.C."/>
            <person name="Hernandez J."/>
            <person name="Hodgson A.V."/>
            <person name="Hume J."/>
            <person name="Jackson A."/>
            <person name="Khan Z.M."/>
            <person name="Kovar-Smith C."/>
            <person name="Lewis L.R."/>
            <person name="Lozado R.J."/>
            <person name="Metzker M.L."/>
            <person name="Milosavljevic A."/>
            <person name="Miner G.R."/>
            <person name="Montgomery K.T."/>
            <person name="Morgan M.B."/>
            <person name="Nazareth L.V."/>
            <person name="Scott G."/>
            <person name="Sodergren E."/>
            <person name="Song X.-Z."/>
            <person name="Steffen D."/>
            <person name="Lovering R.C."/>
            <person name="Wheeler D.A."/>
            <person name="Worley K.C."/>
            <person name="Yuan Y."/>
            <person name="Zhang Z."/>
            <person name="Adams C.Q."/>
            <person name="Ansari-Lari M.A."/>
            <person name="Ayele M."/>
            <person name="Brown M.J."/>
            <person name="Chen G."/>
            <person name="Chen Z."/>
            <person name="Clerc-Blankenburg K.P."/>
            <person name="Davis C."/>
            <person name="Delgado O."/>
            <person name="Dinh H.H."/>
            <person name="Draper H."/>
            <person name="Gonzalez-Garay M.L."/>
            <person name="Havlak P."/>
            <person name="Jackson L.R."/>
            <person name="Jacob L.S."/>
            <person name="Kelly S.H."/>
            <person name="Li L."/>
            <person name="Li Z."/>
            <person name="Liu J."/>
            <person name="Liu W."/>
            <person name="Lu J."/>
            <person name="Maheshwari M."/>
            <person name="Nguyen B.-V."/>
            <person name="Okwuonu G.O."/>
            <person name="Pasternak S."/>
            <person name="Perez L.M."/>
            <person name="Plopper F.J.H."/>
            <person name="Santibanez J."/>
            <person name="Shen H."/>
            <person name="Tabor P.E."/>
            <person name="Verduzco D."/>
            <person name="Waldron L."/>
            <person name="Wang Q."/>
            <person name="Williams G.A."/>
            <person name="Zhang J."/>
            <person name="Zhou J."/>
            <person name="Allen C.C."/>
            <person name="Amin A.G."/>
            <person name="Anyalebechi V."/>
            <person name="Bailey M."/>
            <person name="Barbaria J.A."/>
            <person name="Bimage K.E."/>
            <person name="Bryant N.P."/>
            <person name="Burch P.E."/>
            <person name="Burkett C.E."/>
            <person name="Burrell K.L."/>
            <person name="Calderon E."/>
            <person name="Cardenas V."/>
            <person name="Carter K."/>
            <person name="Casias K."/>
            <person name="Cavazos I."/>
            <person name="Cavazos S.R."/>
            <person name="Ceasar H."/>
            <person name="Chacko J."/>
            <person name="Chan S.N."/>
            <person name="Chavez D."/>
            <person name="Christopoulos C."/>
            <person name="Chu J."/>
            <person name="Cockrell R."/>
            <person name="Cox C.D."/>
            <person name="Dang M."/>
            <person name="Dathorne S.R."/>
            <person name="David R."/>
            <person name="Davis C.M."/>
            <person name="Davy-Carroll L."/>
            <person name="Deshazo D.R."/>
            <person name="Donlin J.E."/>
            <person name="D'Souza L."/>
            <person name="Eaves K.A."/>
            <person name="Egan A."/>
            <person name="Emery-Cohen A.J."/>
            <person name="Escotto M."/>
            <person name="Flagg N."/>
            <person name="Forbes L.D."/>
            <person name="Gabisi A.M."/>
            <person name="Garza M."/>
            <person name="Hamilton C."/>
            <person name="Henderson N."/>
            <person name="Hernandez O."/>
            <person name="Hines S."/>
            <person name="Hogues M.E."/>
            <person name="Huang M."/>
            <person name="Idlebird D.G."/>
            <person name="Johnson R."/>
            <person name="Jolivet A."/>
            <person name="Jones S."/>
            <person name="Kagan R."/>
            <person name="King L.M."/>
            <person name="Leal B."/>
            <person name="Lebow H."/>
            <person name="Lee S."/>
            <person name="LeVan J.M."/>
            <person name="Lewis L.C."/>
            <person name="London P."/>
            <person name="Lorensuhewa L.M."/>
            <person name="Loulseged H."/>
            <person name="Lovett D.A."/>
            <person name="Lucier A."/>
            <person name="Lucier R.L."/>
            <person name="Ma J."/>
            <person name="Madu R.C."/>
            <person name="Mapua P."/>
            <person name="Martindale A.D."/>
            <person name="Martinez E."/>
            <person name="Massey E."/>
            <person name="Mawhiney S."/>
            <person name="Meador M.G."/>
            <person name="Mendez S."/>
            <person name="Mercado C."/>
            <person name="Mercado I.C."/>
            <person name="Merritt C.E."/>
            <person name="Miner Z.L."/>
            <person name="Minja E."/>
            <person name="Mitchell T."/>
            <person name="Mohabbat F."/>
            <person name="Mohabbat K."/>
            <person name="Montgomery B."/>
            <person name="Moore N."/>
            <person name="Morris S."/>
            <person name="Munidasa M."/>
            <person name="Ngo R.N."/>
            <person name="Nguyen N.B."/>
            <person name="Nickerson E."/>
            <person name="Nwaokelemeh O.O."/>
            <person name="Nwokenkwo S."/>
            <person name="Obregon M."/>
            <person name="Oguh M."/>
            <person name="Oragunye N."/>
            <person name="Oviedo R.J."/>
            <person name="Parish B.J."/>
            <person name="Parker D.N."/>
            <person name="Parrish J."/>
            <person name="Parks K.L."/>
            <person name="Paul H.A."/>
            <person name="Payton B.A."/>
            <person name="Perez A."/>
            <person name="Perrin W."/>
            <person name="Pickens A."/>
            <person name="Primus E.L."/>
            <person name="Pu L.-L."/>
            <person name="Puazo M."/>
            <person name="Quiles M.M."/>
            <person name="Quiroz J.B."/>
            <person name="Rabata D."/>
            <person name="Reeves K."/>
            <person name="Ruiz S.J."/>
            <person name="Shao H."/>
            <person name="Sisson I."/>
            <person name="Sonaike T."/>
            <person name="Sorelle R.P."/>
            <person name="Sutton A.E."/>
            <person name="Svatek A.F."/>
            <person name="Svetz L.A."/>
            <person name="Tamerisa K.S."/>
            <person name="Taylor T.R."/>
            <person name="Teague B."/>
            <person name="Thomas N."/>
            <person name="Thorn R.D."/>
            <person name="Trejos Z.Y."/>
            <person name="Trevino B.K."/>
            <person name="Ukegbu O.N."/>
            <person name="Urban J.B."/>
            <person name="Vasquez L.I."/>
            <person name="Vera V.A."/>
            <person name="Villasana D.M."/>
            <person name="Wang L."/>
            <person name="Ward-Moore S."/>
            <person name="Warren J.T."/>
            <person name="Wei X."/>
            <person name="White F."/>
            <person name="Williamson A.L."/>
            <person name="Wleczyk R."/>
            <person name="Wooden H.S."/>
            <person name="Wooden S.H."/>
            <person name="Yen J."/>
            <person name="Yoon L."/>
            <person name="Yoon V."/>
            <person name="Zorrilla S.E."/>
            <person name="Nelson D."/>
            <person name="Kucherlapati R."/>
            <person name="Weinstock G."/>
            <person name="Gibbs R.A."/>
        </authorList>
    </citation>
    <scope>NUCLEOTIDE SEQUENCE [LARGE SCALE GENOMIC DNA]</scope>
</reference>
<reference key="4">
    <citation type="submission" date="2005-07" db="EMBL/GenBank/DDBJ databases">
        <authorList>
            <person name="Mural R.J."/>
            <person name="Istrail S."/>
            <person name="Sutton G.G."/>
            <person name="Florea L."/>
            <person name="Halpern A.L."/>
            <person name="Mobarry C.M."/>
            <person name="Lippert R."/>
            <person name="Walenz B."/>
            <person name="Shatkay H."/>
            <person name="Dew I."/>
            <person name="Miller J.R."/>
            <person name="Flanigan M.J."/>
            <person name="Edwards N.J."/>
            <person name="Bolanos R."/>
            <person name="Fasulo D."/>
            <person name="Halldorsson B.V."/>
            <person name="Hannenhalli S."/>
            <person name="Turner R."/>
            <person name="Yooseph S."/>
            <person name="Lu F."/>
            <person name="Nusskern D.R."/>
            <person name="Shue B.C."/>
            <person name="Zheng X.H."/>
            <person name="Zhong F."/>
            <person name="Delcher A.L."/>
            <person name="Huson D.H."/>
            <person name="Kravitz S.A."/>
            <person name="Mouchard L."/>
            <person name="Reinert K."/>
            <person name="Remington K.A."/>
            <person name="Clark A.G."/>
            <person name="Waterman M.S."/>
            <person name="Eichler E.E."/>
            <person name="Adams M.D."/>
            <person name="Hunkapiller M.W."/>
            <person name="Myers E.W."/>
            <person name="Venter J.C."/>
        </authorList>
    </citation>
    <scope>NUCLEOTIDE SEQUENCE [LARGE SCALE GENOMIC DNA]</scope>
</reference>
<reference key="5">
    <citation type="journal article" date="2004" name="Genome Res.">
        <title>The status, quality, and expansion of the NIH full-length cDNA project: the Mammalian Gene Collection (MGC).</title>
        <authorList>
            <consortium name="The MGC Project Team"/>
        </authorList>
    </citation>
    <scope>NUCLEOTIDE SEQUENCE [LARGE SCALE MRNA] (ISOFORM 1)</scope>
    <source>
        <tissue>Brain</tissue>
    </source>
</reference>
<reference key="6">
    <citation type="journal article" date="1995" name="Oncogene">
        <title>Molecular interactions of the Src homology 2 domain protein Shb with phosphotyrosine residues, tyrosine kinase receptors and Src homology 3 domain proteins.</title>
        <authorList>
            <person name="Karlsson T."/>
            <person name="Songyang Z."/>
            <person name="Landgren E."/>
            <person name="Lavergne C."/>
            <person name="Di Fiore P.P."/>
            <person name="Anafi M."/>
            <person name="Pawson T."/>
            <person name="Cantley L.C."/>
            <person name="Claesson-Welsh L."/>
            <person name="Welsh M."/>
        </authorList>
    </citation>
    <scope>INTERACTION WITH SHB</scope>
</reference>
<reference key="7">
    <citation type="journal article" date="2001" name="Oncogene">
        <title>Overexpression of p97Eps8 leads to cellular transformation: implication of pleckstrin homology domain in p97Eps8-mediated ERK activation.</title>
        <authorList>
            <person name="Maa M.C."/>
            <person name="Hsieh C.Y."/>
            <person name="Leu T.H."/>
        </authorList>
    </citation>
    <scope>INVOLVEMENT IN CANCER</scope>
</reference>
<reference key="8">
    <citation type="journal article" date="2004" name="Cancer Res.">
        <title>IRSp53/Eps8 complex is important for positive regulation of Rac and cancer cell motility/invasiveness.</title>
        <authorList>
            <person name="Funato Y."/>
            <person name="Terabayashi T."/>
            <person name="Suenaga N."/>
            <person name="Seiki M."/>
            <person name="Takenawa T."/>
            <person name="Miki H."/>
        </authorList>
    </citation>
    <scope>INTERACTION WITH BAIAP2</scope>
</reference>
<reference key="9">
    <citation type="journal article" date="2004" name="Nat. Cell Biol.">
        <title>Eps8 controls actin-based motility by capping the barbed ends of actin filaments.</title>
        <authorList>
            <person name="Disanza A."/>
            <person name="Carlier M.F."/>
            <person name="Stradal T.E."/>
            <person name="Didry D."/>
            <person name="Frittoli E."/>
            <person name="Confalonieri S."/>
            <person name="Croce A."/>
            <person name="Wehland J."/>
            <person name="Di Fiore P.P."/>
            <person name="Scita G."/>
        </authorList>
    </citation>
    <scope>FUNCTION</scope>
</reference>
<reference key="10">
    <citation type="journal article" date="2006" name="Cell">
        <title>Global, in vivo, and site-specific phosphorylation dynamics in signaling networks.</title>
        <authorList>
            <person name="Olsen J.V."/>
            <person name="Blagoev B."/>
            <person name="Gnad F."/>
            <person name="Macek B."/>
            <person name="Kumar C."/>
            <person name="Mortensen P."/>
            <person name="Mann M."/>
        </authorList>
    </citation>
    <scope>IDENTIFICATION BY MASS SPECTROMETRY [LARGE SCALE ANALYSIS]</scope>
    <source>
        <tissue>Cervix carcinoma</tissue>
    </source>
</reference>
<reference key="11">
    <citation type="journal article" date="2006" name="Nat. Cell Biol.">
        <title>Regulation of cell shape by Cdc42 is mediated by the synergic actin-bundling activity of the Eps8-IRSp53 complex.</title>
        <authorList>
            <person name="Disanza A."/>
            <person name="Mantoani S."/>
            <person name="Hertzog M."/>
            <person name="Gerboth S."/>
            <person name="Frittoli E."/>
            <person name="Steffen A."/>
            <person name="Berhoerster K."/>
            <person name="Kreienkamp H.J."/>
            <person name="Milanesi F."/>
            <person name="Di Fiore P.P."/>
            <person name="Ciliberto A."/>
            <person name="Stradal T.E."/>
            <person name="Scita G."/>
        </authorList>
    </citation>
    <scope>FUNCTION</scope>
</reference>
<reference key="12">
    <citation type="journal article" date="2007" name="Cancer Lett.">
        <title>Eps8 is increased in pancreatic cancer and required for dynamic actin-based cell protrusions and intercellular cytoskeletal organization.</title>
        <authorList>
            <person name="Welsch T."/>
            <person name="Endlich K."/>
            <person name="Giese T."/>
            <person name="Buchler M.W."/>
            <person name="Schmidt J."/>
        </authorList>
    </citation>
    <scope>INVOLVEMENT IN CANCER</scope>
</reference>
<reference key="13">
    <citation type="journal article" date="2008" name="Mol. Cancer Ther.">
        <title>Eps8 decreases chemosensitivity and affects survival of cervical cancer patients.</title>
        <authorList>
            <person name="Chen Y.J."/>
            <person name="Shen M.R."/>
            <person name="Chen Y.J."/>
            <person name="Maa M.C."/>
            <person name="Leu T.H."/>
        </authorList>
    </citation>
    <scope>INVOLVEMENT IN CANCER</scope>
</reference>
<reference key="14">
    <citation type="journal article" date="2008" name="Proc. Natl. Acad. Sci. U.S.A.">
        <title>A quantitative atlas of mitotic phosphorylation.</title>
        <authorList>
            <person name="Dephoure N."/>
            <person name="Zhou C."/>
            <person name="Villen J."/>
            <person name="Beausoleil S.A."/>
            <person name="Bakalarski C.E."/>
            <person name="Elledge S.J."/>
            <person name="Gygi S.P."/>
        </authorList>
    </citation>
    <scope>PHOSPHORYLATION [LARGE SCALE ANALYSIS] AT SER-476</scope>
    <scope>IDENTIFICATION BY MASS SPECTROMETRY [LARGE SCALE ANALYSIS]</scope>
    <source>
        <tissue>Cervix carcinoma</tissue>
    </source>
</reference>
<reference key="15">
    <citation type="journal article" date="2009" name="Carcinogenesis">
        <title>Role for EPS8 in squamous carcinogenesis.</title>
        <authorList>
            <person name="Wang H."/>
            <person name="Patel V."/>
            <person name="Miyazaki H."/>
            <person name="Gutkind J.S."/>
            <person name="Yeudall W.A."/>
        </authorList>
    </citation>
    <scope>INVOLVEMENT IN CANCER</scope>
</reference>
<reference key="16">
    <citation type="journal article" date="2009" name="Endocrinology">
        <title>Epidermal growth factor receptor pathway substrate 8 is overexpressed in human pituitary tumors: role in proliferation and survival.</title>
        <authorList>
            <person name="Xu M."/>
            <person name="Shorts-Cary L."/>
            <person name="Knox A.J."/>
            <person name="Kleinsmidt-DeMasters B."/>
            <person name="Lillehei K."/>
            <person name="Wierman M.E."/>
        </authorList>
    </citation>
    <scope>INVOLVEMENT IN CANCER</scope>
</reference>
<reference key="17">
    <citation type="journal article" date="2009" name="Oncogene">
        <title>Upregulation of Eps8 in oral squamous cell carcinoma promotes cell migration and invasion through integrin-dependent Rac1 activation.</title>
        <authorList>
            <person name="Yap L.F."/>
            <person name="Jenei V."/>
            <person name="Robinson C.M."/>
            <person name="Moutasim K."/>
            <person name="Benn T.M."/>
            <person name="Threadgold S.P."/>
            <person name="Lopes V."/>
            <person name="Wei W."/>
            <person name="Thomas G.J."/>
            <person name="Paterson I.C."/>
        </authorList>
    </citation>
    <scope>INVOLVEMENT IN CANCER</scope>
</reference>
<reference key="18">
    <citation type="journal article" date="2014" name="J. Proteomics">
        <title>An enzyme assisted RP-RPLC approach for in-depth analysis of human liver phosphoproteome.</title>
        <authorList>
            <person name="Bian Y."/>
            <person name="Song C."/>
            <person name="Cheng K."/>
            <person name="Dong M."/>
            <person name="Wang F."/>
            <person name="Huang J."/>
            <person name="Sun D."/>
            <person name="Wang L."/>
            <person name="Ye M."/>
            <person name="Zou H."/>
        </authorList>
    </citation>
    <scope>PHOSPHORYLATION [LARGE SCALE ANALYSIS] AT THR-223 AND SER-625</scope>
    <scope>IDENTIFICATION BY MASS SPECTROMETRY [LARGE SCALE ANALYSIS]</scope>
    <source>
        <tissue>Liver</tissue>
    </source>
</reference>
<reference key="19">
    <citation type="journal article" date="2014" name="Orphanet J. Rare Dis.">
        <title>EPS8, encoding an actin-binding protein of cochlear hair cell stereocilia, is a new causal gene for autosomal recessive profound deafness.</title>
        <authorList>
            <person name="Behlouli A."/>
            <person name="Bonnet C."/>
            <person name="Abdi S."/>
            <person name="Bouaita A."/>
            <person name="Lelli A."/>
            <person name="Hardelin J.P."/>
            <person name="Schietroma C."/>
            <person name="Rous Y."/>
            <person name="Louha M."/>
            <person name="Cheknane A."/>
            <person name="Lebdi H."/>
            <person name="Boudjelida K."/>
            <person name="Makrelouf M."/>
            <person name="Zenati A."/>
            <person name="Petit C."/>
        </authorList>
    </citation>
    <scope>INVOLVEMENT IN DFNB102</scope>
</reference>
<reference key="20">
    <citation type="submission" date="2007-07" db="PDB data bank">
        <title>Solution structure of the C-terminal SAM-domain of epidermal growth receptor pathway substrate 8.</title>
        <authorList>
            <consortium name="RIKEN structural genomics initiative (RSGI)"/>
        </authorList>
    </citation>
    <scope>STRUCTURE BY NMR OF 699-788</scope>
</reference>
<reference key="21">
    <citation type="journal article" date="2016" name="Hum. Mol. Genet.">
        <title>Homozygous mutation of PLCZ1 leads to defective human oocyte activation and infertility that is not rescued by the WW-binding protein PAWP.</title>
        <authorList>
            <person name="Escoffier J."/>
            <person name="Lee H.C."/>
            <person name="Yassine S."/>
            <person name="Zouari R."/>
            <person name="Martinez G."/>
            <person name="Karaouzene T."/>
            <person name="Coutton C."/>
            <person name="Kherraf Z.E."/>
            <person name="Halouani L."/>
            <person name="Triki C."/>
            <person name="Nef S."/>
            <person name="Thierry-Mieg N."/>
            <person name="Savinov S.N."/>
            <person name="Fissore R."/>
            <person name="Ray P.F."/>
            <person name="Arnoult C."/>
        </authorList>
    </citation>
    <scope>VARIANT GLU-761</scope>
</reference>
<proteinExistence type="evidence at protein level"/>
<protein>
    <recommendedName>
        <fullName>Epidermal growth factor receptor kinase substrate 8</fullName>
    </recommendedName>
</protein>
<accession>Q12929</accession>
<accession>A6NMC3</accession>
<accession>A8K6W2</accession>
<accession>A8KA66</accession>
<accession>B4DX66</accession>
<accession>Q8N6J0</accession>
<feature type="chain" id="PRO_0000086994" description="Epidermal growth factor receptor kinase substrate 8">
    <location>
        <begin position="1"/>
        <end position="822"/>
    </location>
</feature>
<feature type="domain" description="PTB" evidence="4">
    <location>
        <begin position="64"/>
        <end position="194"/>
    </location>
</feature>
<feature type="domain" description="SH3" evidence="5">
    <location>
        <begin position="531"/>
        <end position="590"/>
    </location>
</feature>
<feature type="region of interest" description="Disordered" evidence="6">
    <location>
        <begin position="1"/>
        <end position="39"/>
    </location>
</feature>
<feature type="region of interest" description="Disordered" evidence="6">
    <location>
        <begin position="202"/>
        <end position="225"/>
    </location>
</feature>
<feature type="region of interest" description="Disordered" evidence="6">
    <location>
        <begin position="298"/>
        <end position="320"/>
    </location>
</feature>
<feature type="region of interest" description="Disordered" evidence="6">
    <location>
        <begin position="612"/>
        <end position="689"/>
    </location>
</feature>
<feature type="region of interest" description="Effector region" evidence="1">
    <location>
        <begin position="649"/>
        <end position="822"/>
    </location>
</feature>
<feature type="region of interest" description="Amphipathic helix" evidence="1">
    <location>
        <begin position="680"/>
        <end position="698"/>
    </location>
</feature>
<feature type="region of interest" description="Helix bundle 1" evidence="1">
    <location>
        <begin position="718"/>
        <end position="738"/>
    </location>
</feature>
<feature type="region of interest" description="Helix bundle 2" evidence="1">
    <location>
        <begin position="752"/>
        <end position="757"/>
    </location>
</feature>
<feature type="region of interest" description="Helix bundle 3" evidence="1">
    <location>
        <begin position="762"/>
        <end position="767"/>
    </location>
</feature>
<feature type="region of interest" description="Helix bundle 4" evidence="1">
    <location>
        <begin position="766"/>
        <end position="785"/>
    </location>
</feature>
<feature type="region of interest" description="Disordered" evidence="6">
    <location>
        <begin position="787"/>
        <end position="822"/>
    </location>
</feature>
<feature type="compositionally biased region" description="Polar residues" evidence="6">
    <location>
        <begin position="1"/>
        <end position="10"/>
    </location>
</feature>
<feature type="compositionally biased region" description="Polar residues" evidence="6">
    <location>
        <begin position="17"/>
        <end position="30"/>
    </location>
</feature>
<feature type="compositionally biased region" description="Pro residues" evidence="6">
    <location>
        <begin position="208"/>
        <end position="221"/>
    </location>
</feature>
<feature type="compositionally biased region" description="Basic residues" evidence="6">
    <location>
        <begin position="299"/>
        <end position="309"/>
    </location>
</feature>
<feature type="compositionally biased region" description="Pro residues" evidence="6">
    <location>
        <begin position="618"/>
        <end position="645"/>
    </location>
</feature>
<feature type="compositionally biased region" description="Basic and acidic residues" evidence="6">
    <location>
        <begin position="671"/>
        <end position="687"/>
    </location>
</feature>
<feature type="modified residue" description="Phosphoserine" evidence="2">
    <location>
        <position position="58"/>
    </location>
</feature>
<feature type="modified residue" description="Phosphothreonine" evidence="21">
    <location>
        <position position="223"/>
    </location>
</feature>
<feature type="modified residue" description="Phosphothreonine" evidence="3">
    <location>
        <position position="317"/>
    </location>
</feature>
<feature type="modified residue" description="Phosphoserine" evidence="20">
    <location>
        <position position="476"/>
    </location>
</feature>
<feature type="modified residue" description="Phosphoserine" evidence="21">
    <location>
        <position position="625"/>
    </location>
</feature>
<feature type="modified residue" description="Phosphothreonine; by MAPK" evidence="3">
    <location>
        <position position="629"/>
    </location>
</feature>
<feature type="modified residue" description="Phosphoserine" evidence="3">
    <location>
        <position position="659"/>
    </location>
</feature>
<feature type="modified residue" description="Phosphoserine" evidence="3">
    <location>
        <position position="662"/>
    </location>
</feature>
<feature type="modified residue" description="Phosphoserine" evidence="3">
    <location>
        <position position="685"/>
    </location>
</feature>
<feature type="modified residue" description="Phosphoserine" evidence="3">
    <location>
        <position position="811"/>
    </location>
</feature>
<feature type="modified residue" description="Phosphoserine" evidence="3">
    <location>
        <position position="815"/>
    </location>
</feature>
<feature type="splice variant" id="VSP_056460" description="In isoform 2." evidence="18">
    <location>
        <begin position="1"/>
        <end position="260"/>
    </location>
</feature>
<feature type="sequence variant" id="VAR_050971" description="In dbSNP:rs7137185." evidence="16">
    <original>D</original>
    <variation>E</variation>
    <location>
        <position position="761"/>
    </location>
</feature>
<feature type="sequence variant" id="VAR_050972" description="In dbSNP:rs1802658.">
    <original>A</original>
    <variation>S</variation>
    <location>
        <position position="806"/>
    </location>
</feature>
<feature type="sequence conflict" description="In Ref. 2; BAF84466." evidence="19" ref="2">
    <original>F</original>
    <variation>S</variation>
    <location>
        <position position="73"/>
    </location>
</feature>
<feature type="sequence conflict" description="In Ref. 2; BAF84466." evidence="19" ref="2">
    <original>F</original>
    <variation>S</variation>
    <location>
        <position position="128"/>
    </location>
</feature>
<feature type="sequence conflict" description="In Ref. 2; BAF84466." evidence="19" ref="2">
    <original>R</original>
    <variation>G</variation>
    <location>
        <position position="194"/>
    </location>
</feature>
<feature type="sequence conflict" description="In Ref. 2; BAF85620." evidence="19" ref="2">
    <original>A</original>
    <variation>S</variation>
    <location>
        <position position="205"/>
    </location>
</feature>
<feature type="sequence conflict" description="In Ref. 2; BAF85620." evidence="19" ref="2">
    <original>I</original>
    <variation>V</variation>
    <location>
        <position position="497"/>
    </location>
</feature>
<feature type="sequence conflict" description="In Ref. 5; AAH30010." evidence="19" ref="5">
    <original>A</original>
    <variation>V</variation>
    <location>
        <position position="631"/>
    </location>
</feature>
<feature type="sequence conflict" description="In Ref. 2; BAF85620." evidence="19" ref="2">
    <original>A</original>
    <variation>T</variation>
    <location>
        <position position="705"/>
    </location>
</feature>
<feature type="strand" evidence="23">
    <location>
        <begin position="535"/>
        <end position="540"/>
    </location>
</feature>
<feature type="strand" evidence="23">
    <location>
        <begin position="557"/>
        <end position="562"/>
    </location>
</feature>
<feature type="strand" evidence="23">
    <location>
        <begin position="564"/>
        <end position="571"/>
    </location>
</feature>
<feature type="strand" evidence="23">
    <location>
        <begin position="577"/>
        <end position="581"/>
    </location>
</feature>
<feature type="helix" evidence="23">
    <location>
        <begin position="582"/>
        <end position="584"/>
    </location>
</feature>
<feature type="strand" evidence="23">
    <location>
        <begin position="585"/>
        <end position="587"/>
    </location>
</feature>
<feature type="helix" evidence="22">
    <location>
        <begin position="729"/>
        <end position="737"/>
    </location>
</feature>
<feature type="helix" evidence="22">
    <location>
        <begin position="741"/>
        <end position="746"/>
    </location>
</feature>
<feature type="strand" evidence="22">
    <location>
        <begin position="748"/>
        <end position="750"/>
    </location>
</feature>
<feature type="helix" evidence="22">
    <location>
        <begin position="752"/>
        <end position="757"/>
    </location>
</feature>
<feature type="helix" evidence="22">
    <location>
        <begin position="760"/>
        <end position="766"/>
    </location>
</feature>
<feature type="helix" evidence="22">
    <location>
        <begin position="770"/>
        <end position="784"/>
    </location>
</feature>